<reference key="1">
    <citation type="journal article" date="2014" name="Stand. Genomic Sci.">
        <title>Complete genome sequence of Anabaena variabilis ATCC 29413.</title>
        <authorList>
            <person name="Thiel T."/>
            <person name="Pratte B.S."/>
            <person name="Zhong J."/>
            <person name="Goodwin L."/>
            <person name="Copeland A."/>
            <person name="Lucas S."/>
            <person name="Han C."/>
            <person name="Pitluck S."/>
            <person name="Land M.L."/>
            <person name="Kyrpides N.C."/>
            <person name="Woyke T."/>
        </authorList>
    </citation>
    <scope>NUCLEOTIDE SEQUENCE [LARGE SCALE GENOMIC DNA]</scope>
    <source>
        <strain>ATCC 29413 / PCC 7937</strain>
    </source>
</reference>
<feature type="chain" id="PRO_0000353633" description="NAD(P)H-quinone oxidoreductase subunit O">
    <location>
        <begin position="1"/>
        <end position="70"/>
    </location>
</feature>
<name>NDHO_TRIV2</name>
<evidence type="ECO:0000255" key="1">
    <source>
        <dbReference type="HAMAP-Rule" id="MF_01354"/>
    </source>
</evidence>
<protein>
    <recommendedName>
        <fullName evidence="1">NAD(P)H-quinone oxidoreductase subunit O</fullName>
        <ecNumber evidence="1">7.1.1.-</ecNumber>
    </recommendedName>
    <alternativeName>
        <fullName evidence="1">NAD(P)H dehydrogenase I subunit O</fullName>
    </alternativeName>
    <alternativeName>
        <fullName>NDH-1 subunit O</fullName>
    </alternativeName>
    <alternativeName>
        <fullName>NDH-O</fullName>
    </alternativeName>
</protein>
<proteinExistence type="inferred from homology"/>
<keyword id="KW-0472">Membrane</keyword>
<keyword id="KW-0520">NAD</keyword>
<keyword id="KW-0521">NADP</keyword>
<keyword id="KW-0618">Plastoquinone</keyword>
<keyword id="KW-0874">Quinone</keyword>
<keyword id="KW-0793">Thylakoid</keyword>
<keyword id="KW-1278">Translocase</keyword>
<keyword id="KW-0813">Transport</keyword>
<organism>
    <name type="scientific">Trichormus variabilis (strain ATCC 29413 / PCC 7937)</name>
    <name type="common">Anabaena variabilis</name>
    <dbReference type="NCBI Taxonomy" id="240292"/>
    <lineage>
        <taxon>Bacteria</taxon>
        <taxon>Bacillati</taxon>
        <taxon>Cyanobacteriota</taxon>
        <taxon>Cyanophyceae</taxon>
        <taxon>Nostocales</taxon>
        <taxon>Nostocaceae</taxon>
        <taxon>Trichormus</taxon>
    </lineage>
</organism>
<accession>Q3MDP0</accession>
<dbReference type="EC" id="7.1.1.-" evidence="1"/>
<dbReference type="EMBL" id="CP000117">
    <property type="protein sequence ID" value="ABA20896.1"/>
    <property type="molecule type" value="Genomic_DNA"/>
</dbReference>
<dbReference type="SMR" id="Q3MDP0"/>
<dbReference type="STRING" id="240292.Ava_1272"/>
<dbReference type="KEGG" id="ava:Ava_1272"/>
<dbReference type="eggNOG" id="ENOG5032XZT">
    <property type="taxonomic scope" value="Bacteria"/>
</dbReference>
<dbReference type="HOGENOM" id="CLU_195299_0_0_3"/>
<dbReference type="Proteomes" id="UP000002533">
    <property type="component" value="Chromosome"/>
</dbReference>
<dbReference type="GO" id="GO:0031676">
    <property type="term" value="C:plasma membrane-derived thylakoid membrane"/>
    <property type="evidence" value="ECO:0007669"/>
    <property type="project" value="UniProtKB-SubCell"/>
</dbReference>
<dbReference type="GO" id="GO:0016655">
    <property type="term" value="F:oxidoreductase activity, acting on NAD(P)H, quinone or similar compound as acceptor"/>
    <property type="evidence" value="ECO:0007669"/>
    <property type="project" value="UniProtKB-UniRule"/>
</dbReference>
<dbReference type="GO" id="GO:0048038">
    <property type="term" value="F:quinone binding"/>
    <property type="evidence" value="ECO:0007669"/>
    <property type="project" value="UniProtKB-KW"/>
</dbReference>
<dbReference type="HAMAP" id="MF_01354">
    <property type="entry name" value="NDH1_NDH1O"/>
    <property type="match status" value="1"/>
</dbReference>
<dbReference type="InterPro" id="IPR020905">
    <property type="entry name" value="NdhO"/>
</dbReference>
<dbReference type="Pfam" id="PF11910">
    <property type="entry name" value="NdhO"/>
    <property type="match status" value="1"/>
</dbReference>
<comment type="function">
    <text evidence="1">NDH-1 shuttles electrons from an unknown electron donor, via FMN and iron-sulfur (Fe-S) centers, to quinones in the respiratory and/or the photosynthetic chain. The immediate electron acceptor for the enzyme in this species is believed to be plastoquinone. Couples the redox reaction to proton translocation, and thus conserves the redox energy in a proton gradient. Cyanobacterial NDH-1 also plays a role in inorganic carbon-concentration.</text>
</comment>
<comment type="catalytic activity">
    <reaction evidence="1">
        <text>a plastoquinone + NADH + (n+1) H(+)(in) = a plastoquinol + NAD(+) + n H(+)(out)</text>
        <dbReference type="Rhea" id="RHEA:42608"/>
        <dbReference type="Rhea" id="RHEA-COMP:9561"/>
        <dbReference type="Rhea" id="RHEA-COMP:9562"/>
        <dbReference type="ChEBI" id="CHEBI:15378"/>
        <dbReference type="ChEBI" id="CHEBI:17757"/>
        <dbReference type="ChEBI" id="CHEBI:57540"/>
        <dbReference type="ChEBI" id="CHEBI:57945"/>
        <dbReference type="ChEBI" id="CHEBI:62192"/>
    </reaction>
</comment>
<comment type="catalytic activity">
    <reaction evidence="1">
        <text>a plastoquinone + NADPH + (n+1) H(+)(in) = a plastoquinol + NADP(+) + n H(+)(out)</text>
        <dbReference type="Rhea" id="RHEA:42612"/>
        <dbReference type="Rhea" id="RHEA-COMP:9561"/>
        <dbReference type="Rhea" id="RHEA-COMP:9562"/>
        <dbReference type="ChEBI" id="CHEBI:15378"/>
        <dbReference type="ChEBI" id="CHEBI:17757"/>
        <dbReference type="ChEBI" id="CHEBI:57783"/>
        <dbReference type="ChEBI" id="CHEBI:58349"/>
        <dbReference type="ChEBI" id="CHEBI:62192"/>
    </reaction>
</comment>
<comment type="subunit">
    <text evidence="1">NDH-1 can be composed of about 15 different subunits; different subcomplexes with different compositions have been identified which probably have different functions.</text>
</comment>
<comment type="subcellular location">
    <subcellularLocation>
        <location evidence="1">Cellular thylakoid membrane</location>
        <topology evidence="1">Peripheral membrane protein</topology>
        <orientation evidence="1">Cytoplasmic side</orientation>
    </subcellularLocation>
</comment>
<comment type="similarity">
    <text evidence="1">Belongs to the complex I NdhO subunit family.</text>
</comment>
<sequence>MPVKKGEMVRAIREKLENSVEATASDTRFPAYLFETKGEVVDIKGDYALVMFGQVPTPNIWLRLDQIESF</sequence>
<gene>
    <name evidence="1" type="primary">ndhO</name>
    <name type="ordered locus">Ava_1272</name>
</gene>